<accession>Q2UBD9</accession>
<evidence type="ECO:0000250" key="1"/>
<evidence type="ECO:0000255" key="2"/>
<evidence type="ECO:0000255" key="3">
    <source>
        <dbReference type="PROSITE-ProRule" id="PRU10040"/>
    </source>
</evidence>
<evidence type="ECO:0000305" key="4"/>
<organism>
    <name type="scientific">Aspergillus oryzae (strain ATCC 42149 / RIB 40)</name>
    <name type="common">Yellow koji mold</name>
    <dbReference type="NCBI Taxonomy" id="510516"/>
    <lineage>
        <taxon>Eukaryota</taxon>
        <taxon>Fungi</taxon>
        <taxon>Dikarya</taxon>
        <taxon>Ascomycota</taxon>
        <taxon>Pezizomycotina</taxon>
        <taxon>Eurotiomycetes</taxon>
        <taxon>Eurotiomycetidae</taxon>
        <taxon>Eurotiales</taxon>
        <taxon>Aspergillaceae</taxon>
        <taxon>Aspergillus</taxon>
        <taxon>Aspergillus subgen. Circumdati</taxon>
    </lineage>
</organism>
<name>PMEA_ASPOR</name>
<proteinExistence type="inferred from homology"/>
<dbReference type="EC" id="3.1.1.11"/>
<dbReference type="EMBL" id="BA000052">
    <property type="protein sequence ID" value="BAE61126.1"/>
    <property type="molecule type" value="Genomic_DNA"/>
</dbReference>
<dbReference type="RefSeq" id="XP_001822259.1">
    <property type="nucleotide sequence ID" value="XM_001822207.1"/>
</dbReference>
<dbReference type="SMR" id="Q2UBD9"/>
<dbReference type="STRING" id="510516.Q2UBD9"/>
<dbReference type="GlyCosmos" id="Q2UBD9">
    <property type="glycosylation" value="1 site, No reported glycans"/>
</dbReference>
<dbReference type="EnsemblFungi" id="BAE61126">
    <property type="protein sequence ID" value="BAE61126"/>
    <property type="gene ID" value="AO090102000010"/>
</dbReference>
<dbReference type="GeneID" id="5994304"/>
<dbReference type="KEGG" id="aor:AO090102000010"/>
<dbReference type="VEuPathDB" id="FungiDB:AO090102000010"/>
<dbReference type="HOGENOM" id="CLU_012243_1_2_1"/>
<dbReference type="OMA" id="CQFSGYQ"/>
<dbReference type="OrthoDB" id="42622at5052"/>
<dbReference type="UniPathway" id="UPA00545">
    <property type="reaction ID" value="UER00823"/>
</dbReference>
<dbReference type="Proteomes" id="UP000006564">
    <property type="component" value="Chromosome 4"/>
</dbReference>
<dbReference type="GO" id="GO:0005576">
    <property type="term" value="C:extracellular region"/>
    <property type="evidence" value="ECO:0007669"/>
    <property type="project" value="UniProtKB-SubCell"/>
</dbReference>
<dbReference type="GO" id="GO:0030599">
    <property type="term" value="F:pectinesterase activity"/>
    <property type="evidence" value="ECO:0007669"/>
    <property type="project" value="UniProtKB-EC"/>
</dbReference>
<dbReference type="GO" id="GO:0042545">
    <property type="term" value="P:cell wall modification"/>
    <property type="evidence" value="ECO:0007669"/>
    <property type="project" value="InterPro"/>
</dbReference>
<dbReference type="GO" id="GO:0045490">
    <property type="term" value="P:pectin catabolic process"/>
    <property type="evidence" value="ECO:0007669"/>
    <property type="project" value="UniProtKB-UniPathway"/>
</dbReference>
<dbReference type="FunFam" id="2.160.20.10:FF:000014">
    <property type="entry name" value="Pectinesterase"/>
    <property type="match status" value="1"/>
</dbReference>
<dbReference type="Gene3D" id="2.160.20.10">
    <property type="entry name" value="Single-stranded right-handed beta-helix, Pectin lyase-like"/>
    <property type="match status" value="1"/>
</dbReference>
<dbReference type="InterPro" id="IPR012334">
    <property type="entry name" value="Pectin_lyas_fold"/>
</dbReference>
<dbReference type="InterPro" id="IPR011050">
    <property type="entry name" value="Pectin_lyase_fold/virulence"/>
</dbReference>
<dbReference type="InterPro" id="IPR033131">
    <property type="entry name" value="Pectinesterase_Asp_AS"/>
</dbReference>
<dbReference type="InterPro" id="IPR000070">
    <property type="entry name" value="Pectinesterase_cat"/>
</dbReference>
<dbReference type="PANTHER" id="PTHR31321">
    <property type="entry name" value="ACYL-COA THIOESTER HYDROLASE YBHC-RELATED"/>
    <property type="match status" value="1"/>
</dbReference>
<dbReference type="PANTHER" id="PTHR31321:SF57">
    <property type="entry name" value="PECTINESTERASE 53-RELATED"/>
    <property type="match status" value="1"/>
</dbReference>
<dbReference type="Pfam" id="PF01095">
    <property type="entry name" value="Pectinesterase"/>
    <property type="match status" value="1"/>
</dbReference>
<dbReference type="SUPFAM" id="SSF51126">
    <property type="entry name" value="Pectin lyase-like"/>
    <property type="match status" value="1"/>
</dbReference>
<dbReference type="PROSITE" id="PS00503">
    <property type="entry name" value="PECTINESTERASE_2"/>
    <property type="match status" value="1"/>
</dbReference>
<reference key="1">
    <citation type="journal article" date="2005" name="Nature">
        <title>Genome sequencing and analysis of Aspergillus oryzae.</title>
        <authorList>
            <person name="Machida M."/>
            <person name="Asai K."/>
            <person name="Sano M."/>
            <person name="Tanaka T."/>
            <person name="Kumagai T."/>
            <person name="Terai G."/>
            <person name="Kusumoto K."/>
            <person name="Arima T."/>
            <person name="Akita O."/>
            <person name="Kashiwagi Y."/>
            <person name="Abe K."/>
            <person name="Gomi K."/>
            <person name="Horiuchi H."/>
            <person name="Kitamoto K."/>
            <person name="Kobayashi T."/>
            <person name="Takeuchi M."/>
            <person name="Denning D.W."/>
            <person name="Galagan J.E."/>
            <person name="Nierman W.C."/>
            <person name="Yu J."/>
            <person name="Archer D.B."/>
            <person name="Bennett J.W."/>
            <person name="Bhatnagar D."/>
            <person name="Cleveland T.E."/>
            <person name="Fedorova N.D."/>
            <person name="Gotoh O."/>
            <person name="Horikawa H."/>
            <person name="Hosoyama A."/>
            <person name="Ichinomiya M."/>
            <person name="Igarashi R."/>
            <person name="Iwashita K."/>
            <person name="Juvvadi P.R."/>
            <person name="Kato M."/>
            <person name="Kato Y."/>
            <person name="Kin T."/>
            <person name="Kokubun A."/>
            <person name="Maeda H."/>
            <person name="Maeyama N."/>
            <person name="Maruyama J."/>
            <person name="Nagasaki H."/>
            <person name="Nakajima T."/>
            <person name="Oda K."/>
            <person name="Okada K."/>
            <person name="Paulsen I."/>
            <person name="Sakamoto K."/>
            <person name="Sawano T."/>
            <person name="Takahashi M."/>
            <person name="Takase K."/>
            <person name="Terabayashi Y."/>
            <person name="Wortman J.R."/>
            <person name="Yamada O."/>
            <person name="Yamagata Y."/>
            <person name="Anazawa H."/>
            <person name="Hata Y."/>
            <person name="Koide Y."/>
            <person name="Komori T."/>
            <person name="Koyama Y."/>
            <person name="Minetoki T."/>
            <person name="Suharnan S."/>
            <person name="Tanaka A."/>
            <person name="Isono K."/>
            <person name="Kuhara S."/>
            <person name="Ogasawara N."/>
            <person name="Kikuchi H."/>
        </authorList>
    </citation>
    <scope>NUCLEOTIDE SEQUENCE [LARGE SCALE GENOMIC DNA]</scope>
    <source>
        <strain>ATCC 42149 / RIB 40</strain>
    </source>
</reference>
<sequence>MHGSLLKLALLSFSLGSSAAVLPRDTGRTSAPSGCSTVGTSGDYSTIGDALTALGSSTADACIYIAAGTYEEQLVINYAGHLTLYGETTDTQTYKQNTVTITHTISSPEAGSLDNSATVNIKSDLVSVYNINIANGYGSGAQAVALVANADQLGFYACQFTGYQDTLYAKAGHQYYINSRIEGAVDYIFGDASAWFENCDIVSNGAGYITAMSRETTSDTAWYAIDHCNIKAASGVDLTGDVYLGRPWRVLARVIYQYSVLPDIINAKGWHSMADGATPLYYEFNNTGAGSDTSDREYLSTIDAPVTKETVLGDDYKNWVDLSY</sequence>
<feature type="signal peptide" evidence="2">
    <location>
        <begin position="1"/>
        <end position="19"/>
    </location>
</feature>
<feature type="chain" id="PRO_0000394082" description="Probable pectinesterase A">
    <location>
        <begin position="20"/>
        <end position="324"/>
    </location>
</feature>
<feature type="active site" description="Proton donor" evidence="3">
    <location>
        <position position="165"/>
    </location>
</feature>
<feature type="active site" description="Nucleophile" evidence="3">
    <location>
        <position position="186"/>
    </location>
</feature>
<feature type="binding site" evidence="1">
    <location>
        <position position="142"/>
    </location>
    <ligand>
        <name>substrate</name>
    </ligand>
</feature>
<feature type="binding site" evidence="1">
    <location>
        <position position="246"/>
    </location>
    <ligand>
        <name>substrate</name>
    </ligand>
</feature>
<feature type="binding site" evidence="1">
    <location>
        <position position="248"/>
    </location>
    <ligand>
        <name>substrate</name>
    </ligand>
</feature>
<feature type="site" description="Transition state stabilizer" evidence="1">
    <location>
        <position position="164"/>
    </location>
</feature>
<feature type="glycosylation site" description="N-linked (GlcNAc...) asparagine" evidence="2">
    <location>
        <position position="285"/>
    </location>
</feature>
<keyword id="KW-0063">Aspartyl esterase</keyword>
<keyword id="KW-0961">Cell wall biogenesis/degradation</keyword>
<keyword id="KW-0325">Glycoprotein</keyword>
<keyword id="KW-0378">Hydrolase</keyword>
<keyword id="KW-1185">Reference proteome</keyword>
<keyword id="KW-0964">Secreted</keyword>
<keyword id="KW-0732">Signal</keyword>
<protein>
    <recommendedName>
        <fullName>Probable pectinesterase A</fullName>
        <ecNumber>3.1.1.11</ecNumber>
    </recommendedName>
    <alternativeName>
        <fullName>Pectin methylesterase A</fullName>
    </alternativeName>
</protein>
<gene>
    <name type="primary">pmeA</name>
    <name type="ORF">AO090102000010</name>
</gene>
<comment type="function">
    <text evidence="1">Involved in maceration and soft-rotting of plant tissue.</text>
</comment>
<comment type="catalytic activity">
    <reaction>
        <text>[(1-&gt;4)-alpha-D-galacturonosyl methyl ester](n) + n H2O = [(1-&gt;4)-alpha-D-galacturonosyl](n) + n methanol + n H(+)</text>
        <dbReference type="Rhea" id="RHEA:22380"/>
        <dbReference type="Rhea" id="RHEA-COMP:14570"/>
        <dbReference type="Rhea" id="RHEA-COMP:14573"/>
        <dbReference type="ChEBI" id="CHEBI:15377"/>
        <dbReference type="ChEBI" id="CHEBI:15378"/>
        <dbReference type="ChEBI" id="CHEBI:17790"/>
        <dbReference type="ChEBI" id="CHEBI:140522"/>
        <dbReference type="ChEBI" id="CHEBI:140523"/>
        <dbReference type="EC" id="3.1.1.11"/>
    </reaction>
</comment>
<comment type="pathway">
    <text>Glycan metabolism; pectin degradation; 2-dehydro-3-deoxy-D-gluconate from pectin: step 1/5.</text>
</comment>
<comment type="subcellular location">
    <subcellularLocation>
        <location evidence="1">Secreted</location>
    </subcellularLocation>
</comment>
<comment type="similarity">
    <text evidence="4">Belongs to the pectinesterase family.</text>
</comment>